<accession>P65984</accession>
<accession>A0A1R3Y1S4</accession>
<accession>O05836</accession>
<accession>X2BKV0</accession>
<keyword id="KW-0227">DNA damage</keyword>
<keyword id="KW-0233">DNA recombination</keyword>
<keyword id="KW-0234">DNA repair</keyword>
<keyword id="KW-1185">Reference proteome</keyword>
<proteinExistence type="inferred from homology"/>
<reference key="1">
    <citation type="journal article" date="2003" name="Proc. Natl. Acad. Sci. U.S.A.">
        <title>The complete genome sequence of Mycobacterium bovis.</title>
        <authorList>
            <person name="Garnier T."/>
            <person name="Eiglmeier K."/>
            <person name="Camus J.-C."/>
            <person name="Medina N."/>
            <person name="Mansoor H."/>
            <person name="Pryor M."/>
            <person name="Duthoy S."/>
            <person name="Grondin S."/>
            <person name="Lacroix C."/>
            <person name="Monsempe C."/>
            <person name="Simon S."/>
            <person name="Harris B."/>
            <person name="Atkin R."/>
            <person name="Doggett J."/>
            <person name="Mayes R."/>
            <person name="Keating L."/>
            <person name="Wheeler P.R."/>
            <person name="Parkhill J."/>
            <person name="Barrell B.G."/>
            <person name="Cole S.T."/>
            <person name="Gordon S.V."/>
            <person name="Hewinson R.G."/>
        </authorList>
    </citation>
    <scope>NUCLEOTIDE SEQUENCE [LARGE SCALE GENOMIC DNA]</scope>
    <source>
        <strain>ATCC BAA-935 / AF2122/97</strain>
    </source>
</reference>
<reference key="2">
    <citation type="journal article" date="2017" name="Genome Announc.">
        <title>Updated reference genome sequence and annotation of Mycobacterium bovis AF2122/97.</title>
        <authorList>
            <person name="Malone K.M."/>
            <person name="Farrell D."/>
            <person name="Stuber T.P."/>
            <person name="Schubert O.T."/>
            <person name="Aebersold R."/>
            <person name="Robbe-Austerman S."/>
            <person name="Gordon S.V."/>
        </authorList>
    </citation>
    <scope>NUCLEOTIDE SEQUENCE [LARGE SCALE GENOMIC DNA]</scope>
    <scope>GENOME REANNOTATION</scope>
    <source>
        <strain>ATCC BAA-935 / AF2122/97</strain>
    </source>
</reference>
<name>RECO_MYCBO</name>
<evidence type="ECO:0000250" key="1"/>
<evidence type="ECO:0000305" key="2"/>
<gene>
    <name type="primary">recO</name>
    <name type="ordered locus">BQ2027_MB2383C</name>
</gene>
<protein>
    <recommendedName>
        <fullName>DNA repair protein RecO</fullName>
    </recommendedName>
    <alternativeName>
        <fullName>Recombination protein O</fullName>
    </alternativeName>
</protein>
<feature type="chain" id="PRO_0000204969" description="DNA repair protein RecO">
    <location>
        <begin position="1"/>
        <end position="265"/>
    </location>
</feature>
<dbReference type="EMBL" id="LT708304">
    <property type="protein sequence ID" value="SIU00995.1"/>
    <property type="molecule type" value="Genomic_DNA"/>
</dbReference>
<dbReference type="RefSeq" id="NP_856032.1">
    <property type="nucleotide sequence ID" value="NC_002945.3"/>
</dbReference>
<dbReference type="RefSeq" id="WP_003412222.1">
    <property type="nucleotide sequence ID" value="NC_002945.4"/>
</dbReference>
<dbReference type="SMR" id="P65984"/>
<dbReference type="GeneID" id="45426349"/>
<dbReference type="KEGG" id="mbo:BQ2027_MB2383C"/>
<dbReference type="PATRIC" id="fig|233413.5.peg.2618"/>
<dbReference type="Proteomes" id="UP000001419">
    <property type="component" value="Chromosome"/>
</dbReference>
<dbReference type="GO" id="GO:0043590">
    <property type="term" value="C:bacterial nucleoid"/>
    <property type="evidence" value="ECO:0007669"/>
    <property type="project" value="TreeGrafter"/>
</dbReference>
<dbReference type="GO" id="GO:0006310">
    <property type="term" value="P:DNA recombination"/>
    <property type="evidence" value="ECO:0007669"/>
    <property type="project" value="UniProtKB-UniRule"/>
</dbReference>
<dbReference type="GO" id="GO:0006302">
    <property type="term" value="P:double-strand break repair"/>
    <property type="evidence" value="ECO:0007669"/>
    <property type="project" value="TreeGrafter"/>
</dbReference>
<dbReference type="FunFam" id="1.20.1440.120:FF:000002">
    <property type="entry name" value="DNA repair protein RecO"/>
    <property type="match status" value="1"/>
</dbReference>
<dbReference type="FunFam" id="2.40.50.140:FF:000176">
    <property type="entry name" value="DNA repair protein RecO"/>
    <property type="match status" value="1"/>
</dbReference>
<dbReference type="Gene3D" id="2.40.50.140">
    <property type="entry name" value="Nucleic acid-binding proteins"/>
    <property type="match status" value="1"/>
</dbReference>
<dbReference type="Gene3D" id="1.20.1440.120">
    <property type="entry name" value="Recombination protein O, C-terminal domain"/>
    <property type="match status" value="1"/>
</dbReference>
<dbReference type="HAMAP" id="MF_00201">
    <property type="entry name" value="RecO"/>
    <property type="match status" value="1"/>
</dbReference>
<dbReference type="InterPro" id="IPR037278">
    <property type="entry name" value="ARFGAP/RecO"/>
</dbReference>
<dbReference type="InterPro" id="IPR022572">
    <property type="entry name" value="DNA_rep/recomb_RecO_N"/>
</dbReference>
<dbReference type="InterPro" id="IPR012340">
    <property type="entry name" value="NA-bd_OB-fold"/>
</dbReference>
<dbReference type="InterPro" id="IPR003717">
    <property type="entry name" value="RecO"/>
</dbReference>
<dbReference type="InterPro" id="IPR042242">
    <property type="entry name" value="RecO_C"/>
</dbReference>
<dbReference type="NCBIfam" id="TIGR00613">
    <property type="entry name" value="reco"/>
    <property type="match status" value="1"/>
</dbReference>
<dbReference type="PANTHER" id="PTHR33991">
    <property type="entry name" value="DNA REPAIR PROTEIN RECO"/>
    <property type="match status" value="1"/>
</dbReference>
<dbReference type="PANTHER" id="PTHR33991:SF1">
    <property type="entry name" value="DNA REPAIR PROTEIN RECO"/>
    <property type="match status" value="1"/>
</dbReference>
<dbReference type="Pfam" id="PF02565">
    <property type="entry name" value="RecO_C"/>
    <property type="match status" value="1"/>
</dbReference>
<dbReference type="Pfam" id="PF11967">
    <property type="entry name" value="RecO_N"/>
    <property type="match status" value="1"/>
</dbReference>
<dbReference type="SUPFAM" id="SSF57863">
    <property type="entry name" value="ArfGap/RecO-like zinc finger"/>
    <property type="match status" value="1"/>
</dbReference>
<dbReference type="SUPFAM" id="SSF50249">
    <property type="entry name" value="Nucleic acid-binding proteins"/>
    <property type="match status" value="1"/>
</dbReference>
<organism>
    <name type="scientific">Mycobacterium bovis (strain ATCC BAA-935 / AF2122/97)</name>
    <dbReference type="NCBI Taxonomy" id="233413"/>
    <lineage>
        <taxon>Bacteria</taxon>
        <taxon>Bacillati</taxon>
        <taxon>Actinomycetota</taxon>
        <taxon>Actinomycetes</taxon>
        <taxon>Mycobacteriales</taxon>
        <taxon>Mycobacteriaceae</taxon>
        <taxon>Mycobacterium</taxon>
        <taxon>Mycobacterium tuberculosis complex</taxon>
    </lineage>
</organism>
<comment type="function">
    <text evidence="1">Involved in DNA repair and RecF pathway recombination.</text>
</comment>
<comment type="similarity">
    <text evidence="2">Belongs to the RecO family.</text>
</comment>
<sequence>MRLYRDRAVVLRQHKLGEADRIVTLLTRDHGLVRAVAKGVRRTRSKFGARLEPFAHIEVQLHPGRNLDIVTQVVSVDAFATDIVADYGRYTCGCAILETAERLAGEERAPAPALHRLTVGALRAVADGQRPRDLLLDAYLLRAMGIAGWAPALTECARCATPGPHRAFHIATGGSVCAHCRPAGSTTPPLGVVDLMSALYDGDWEAAEAAPQSARSHVSGLVAAHLQWHLERQLKTLPLVERFYQADRSVAERRAALIGQDIAGG</sequence>